<feature type="chain" id="PRO_1000021895" description="Homoserine O-succinyltransferase">
    <location>
        <begin position="1"/>
        <end position="379"/>
    </location>
</feature>
<feature type="domain" description="AB hydrolase-1" evidence="1">
    <location>
        <begin position="51"/>
        <end position="360"/>
    </location>
</feature>
<feature type="active site" description="Nucleophile" evidence="1">
    <location>
        <position position="157"/>
    </location>
</feature>
<feature type="active site" evidence="1">
    <location>
        <position position="323"/>
    </location>
</feature>
<feature type="active site" evidence="1">
    <location>
        <position position="356"/>
    </location>
</feature>
<feature type="binding site" evidence="1">
    <location>
        <position position="227"/>
    </location>
    <ligand>
        <name>substrate</name>
    </ligand>
</feature>
<feature type="binding site" evidence="1">
    <location>
        <position position="357"/>
    </location>
    <ligand>
        <name>substrate</name>
    </ligand>
</feature>
<feature type="site" description="Important for acyl-CoA specificity" evidence="1">
    <location>
        <position position="325"/>
    </location>
</feature>
<accession>Q1IGC6</accession>
<reference key="1">
    <citation type="journal article" date="2006" name="Nat. Biotechnol.">
        <title>Complete genome sequence of the entomopathogenic and metabolically versatile soil bacterium Pseudomonas entomophila.</title>
        <authorList>
            <person name="Vodovar N."/>
            <person name="Vallenet D."/>
            <person name="Cruveiller S."/>
            <person name="Rouy Z."/>
            <person name="Barbe V."/>
            <person name="Acosta C."/>
            <person name="Cattolico L."/>
            <person name="Jubin C."/>
            <person name="Lajus A."/>
            <person name="Segurens B."/>
            <person name="Vacherie B."/>
            <person name="Wincker P."/>
            <person name="Weissenbach J."/>
            <person name="Lemaitre B."/>
            <person name="Medigue C."/>
            <person name="Boccard F."/>
        </authorList>
    </citation>
    <scope>NUCLEOTIDE SEQUENCE [LARGE SCALE GENOMIC DNA]</scope>
    <source>
        <strain>L48</strain>
    </source>
</reference>
<gene>
    <name evidence="1" type="primary">metXS</name>
    <name type="ordered locus">PSEEN0315</name>
</gene>
<protein>
    <recommendedName>
        <fullName evidence="1">Homoserine O-succinyltransferase</fullName>
        <shortName evidence="1">HST</shortName>
        <ecNumber evidence="1">2.3.1.46</ecNumber>
    </recommendedName>
    <alternativeName>
        <fullName evidence="1">Homoserine transsuccinylase</fullName>
        <shortName evidence="1">HTS</shortName>
    </alternativeName>
</protein>
<dbReference type="EC" id="2.3.1.46" evidence="1"/>
<dbReference type="EMBL" id="CT573326">
    <property type="protein sequence ID" value="CAK13276.1"/>
    <property type="molecule type" value="Genomic_DNA"/>
</dbReference>
<dbReference type="RefSeq" id="WP_011531736.1">
    <property type="nucleotide sequence ID" value="NC_008027.1"/>
</dbReference>
<dbReference type="SMR" id="Q1IGC6"/>
<dbReference type="STRING" id="384676.PSEEN0315"/>
<dbReference type="ESTHER" id="psepu-METX">
    <property type="family name" value="Homoserine_transacetylase"/>
</dbReference>
<dbReference type="GeneID" id="32803657"/>
<dbReference type="KEGG" id="pen:PSEEN0315"/>
<dbReference type="eggNOG" id="COG2021">
    <property type="taxonomic scope" value="Bacteria"/>
</dbReference>
<dbReference type="HOGENOM" id="CLU_028760_1_2_6"/>
<dbReference type="OrthoDB" id="9800754at2"/>
<dbReference type="UniPathway" id="UPA00051">
    <property type="reaction ID" value="UER00075"/>
</dbReference>
<dbReference type="Proteomes" id="UP000000658">
    <property type="component" value="Chromosome"/>
</dbReference>
<dbReference type="GO" id="GO:0005737">
    <property type="term" value="C:cytoplasm"/>
    <property type="evidence" value="ECO:0007669"/>
    <property type="project" value="UniProtKB-SubCell"/>
</dbReference>
<dbReference type="GO" id="GO:0004414">
    <property type="term" value="F:homoserine O-acetyltransferase activity"/>
    <property type="evidence" value="ECO:0007669"/>
    <property type="project" value="TreeGrafter"/>
</dbReference>
<dbReference type="GO" id="GO:0008899">
    <property type="term" value="F:homoserine O-succinyltransferase activity"/>
    <property type="evidence" value="ECO:0007669"/>
    <property type="project" value="UniProtKB-UniRule"/>
</dbReference>
<dbReference type="GO" id="GO:0009092">
    <property type="term" value="P:homoserine metabolic process"/>
    <property type="evidence" value="ECO:0007669"/>
    <property type="project" value="TreeGrafter"/>
</dbReference>
<dbReference type="GO" id="GO:0009086">
    <property type="term" value="P:methionine biosynthetic process"/>
    <property type="evidence" value="ECO:0007669"/>
    <property type="project" value="UniProtKB-UniRule"/>
</dbReference>
<dbReference type="FunFam" id="1.10.1740.110:FF:000001">
    <property type="entry name" value="Homoserine O-acetyltransferase"/>
    <property type="match status" value="1"/>
</dbReference>
<dbReference type="Gene3D" id="1.10.1740.110">
    <property type="match status" value="1"/>
</dbReference>
<dbReference type="Gene3D" id="3.40.50.1820">
    <property type="entry name" value="alpha/beta hydrolase"/>
    <property type="match status" value="1"/>
</dbReference>
<dbReference type="HAMAP" id="MF_00296">
    <property type="entry name" value="MetX_acyltransf"/>
    <property type="match status" value="1"/>
</dbReference>
<dbReference type="InterPro" id="IPR000073">
    <property type="entry name" value="AB_hydrolase_1"/>
</dbReference>
<dbReference type="InterPro" id="IPR029058">
    <property type="entry name" value="AB_hydrolase_fold"/>
</dbReference>
<dbReference type="InterPro" id="IPR008220">
    <property type="entry name" value="HAT_MetX-like"/>
</dbReference>
<dbReference type="NCBIfam" id="TIGR01392">
    <property type="entry name" value="homoserO_Ac_trn"/>
    <property type="match status" value="1"/>
</dbReference>
<dbReference type="NCBIfam" id="NF001209">
    <property type="entry name" value="PRK00175.1"/>
    <property type="match status" value="1"/>
</dbReference>
<dbReference type="PANTHER" id="PTHR32268">
    <property type="entry name" value="HOMOSERINE O-ACETYLTRANSFERASE"/>
    <property type="match status" value="1"/>
</dbReference>
<dbReference type="PANTHER" id="PTHR32268:SF11">
    <property type="entry name" value="HOMOSERINE O-ACETYLTRANSFERASE"/>
    <property type="match status" value="1"/>
</dbReference>
<dbReference type="Pfam" id="PF00561">
    <property type="entry name" value="Abhydrolase_1"/>
    <property type="match status" value="1"/>
</dbReference>
<dbReference type="PIRSF" id="PIRSF000443">
    <property type="entry name" value="Homoser_Ac_trans"/>
    <property type="match status" value="1"/>
</dbReference>
<dbReference type="SUPFAM" id="SSF53474">
    <property type="entry name" value="alpha/beta-Hydrolases"/>
    <property type="match status" value="1"/>
</dbReference>
<organism>
    <name type="scientific">Pseudomonas entomophila (strain L48)</name>
    <dbReference type="NCBI Taxonomy" id="384676"/>
    <lineage>
        <taxon>Bacteria</taxon>
        <taxon>Pseudomonadati</taxon>
        <taxon>Pseudomonadota</taxon>
        <taxon>Gammaproteobacteria</taxon>
        <taxon>Pseudomonadales</taxon>
        <taxon>Pseudomonadaceae</taxon>
        <taxon>Pseudomonas</taxon>
    </lineage>
</organism>
<comment type="function">
    <text evidence="1">Transfers a succinyl group from succinyl-CoA to L-homoserine, forming succinyl-L-homoserine.</text>
</comment>
<comment type="catalytic activity">
    <reaction evidence="1">
        <text>L-homoserine + succinyl-CoA = O-succinyl-L-homoserine + CoA</text>
        <dbReference type="Rhea" id="RHEA:22008"/>
        <dbReference type="ChEBI" id="CHEBI:57287"/>
        <dbReference type="ChEBI" id="CHEBI:57292"/>
        <dbReference type="ChEBI" id="CHEBI:57476"/>
        <dbReference type="ChEBI" id="CHEBI:57661"/>
        <dbReference type="EC" id="2.3.1.46"/>
    </reaction>
</comment>
<comment type="pathway">
    <text evidence="1">Amino-acid biosynthesis; L-methionine biosynthesis via de novo pathway; O-succinyl-L-homoserine from L-homoserine: step 1/1.</text>
</comment>
<comment type="subunit">
    <text evidence="1">Homodimer.</text>
</comment>
<comment type="subcellular location">
    <subcellularLocation>
        <location evidence="1">Cytoplasm</location>
    </subcellularLocation>
</comment>
<comment type="similarity">
    <text evidence="1">Belongs to the AB hydrolase superfamily. MetX family.</text>
</comment>
<proteinExistence type="inferred from homology"/>
<sequence>MSTVLPEDSVGLVTPQIARFDEPLALACGRSLAAYELIYETYGELNASASNAVLICHALSGHHHAAGYHAATDRKPGWWDSCIGPGKPIDTNRFFVVSLNNLGGCNGSTGPSSVNPATGKPYGADFPVLTVEDWVHSQARLADRLGIQTWAAIVGGSLGGMQALQWTITYPDRVRHCVDIASAPKLSAQNIAFNEVARQAILTDPEFHGGSFQDQGVTPKRGLMLARMVGHITYLSDDSMGEKFGRELKSDKLNYDFHSVEFQVESYLRYQGEEFSGRFDANTYLLMTKALDYYDPAAAHGGDLAATLAHVTADYCIMSFTTDWRFSPARSREIVDALMAARKNVCYLDIDSPYGHDAFLIPTPRYMQGFANYMNRIVI</sequence>
<name>METXS_PSEE4</name>
<keyword id="KW-0012">Acyltransferase</keyword>
<keyword id="KW-0028">Amino-acid biosynthesis</keyword>
<keyword id="KW-0963">Cytoplasm</keyword>
<keyword id="KW-0486">Methionine biosynthesis</keyword>
<keyword id="KW-0808">Transferase</keyword>
<evidence type="ECO:0000255" key="1">
    <source>
        <dbReference type="HAMAP-Rule" id="MF_00296"/>
    </source>
</evidence>